<proteinExistence type="inferred from homology"/>
<reference key="1">
    <citation type="submission" date="2007-08" db="EMBL/GenBank/DDBJ databases">
        <title>Complete sequence of Shewanella sediminis HAW-EB3.</title>
        <authorList>
            <consortium name="US DOE Joint Genome Institute"/>
            <person name="Copeland A."/>
            <person name="Lucas S."/>
            <person name="Lapidus A."/>
            <person name="Barry K."/>
            <person name="Glavina del Rio T."/>
            <person name="Dalin E."/>
            <person name="Tice H."/>
            <person name="Pitluck S."/>
            <person name="Chertkov O."/>
            <person name="Brettin T."/>
            <person name="Bruce D."/>
            <person name="Detter J.C."/>
            <person name="Han C."/>
            <person name="Schmutz J."/>
            <person name="Larimer F."/>
            <person name="Land M."/>
            <person name="Hauser L."/>
            <person name="Kyrpides N."/>
            <person name="Kim E."/>
            <person name="Zhao J.-S."/>
            <person name="Richardson P."/>
        </authorList>
    </citation>
    <scope>NUCLEOTIDE SEQUENCE [LARGE SCALE GENOMIC DNA]</scope>
    <source>
        <strain>HAW-EB3</strain>
    </source>
</reference>
<organism>
    <name type="scientific">Shewanella sediminis (strain HAW-EB3)</name>
    <dbReference type="NCBI Taxonomy" id="425104"/>
    <lineage>
        <taxon>Bacteria</taxon>
        <taxon>Pseudomonadati</taxon>
        <taxon>Pseudomonadota</taxon>
        <taxon>Gammaproteobacteria</taxon>
        <taxon>Alteromonadales</taxon>
        <taxon>Shewanellaceae</taxon>
        <taxon>Shewanella</taxon>
    </lineage>
</organism>
<dbReference type="EMBL" id="CP000821">
    <property type="protein sequence ID" value="ABV37986.1"/>
    <property type="molecule type" value="Genomic_DNA"/>
</dbReference>
<dbReference type="RefSeq" id="WP_012143716.1">
    <property type="nucleotide sequence ID" value="NC_009831.1"/>
</dbReference>
<dbReference type="SMR" id="A8FYR3"/>
<dbReference type="STRING" id="425104.Ssed_3382"/>
<dbReference type="KEGG" id="sse:Ssed_3382"/>
<dbReference type="eggNOG" id="COG4108">
    <property type="taxonomic scope" value="Bacteria"/>
</dbReference>
<dbReference type="HOGENOM" id="CLU_002794_2_1_6"/>
<dbReference type="OrthoDB" id="9804431at2"/>
<dbReference type="Proteomes" id="UP000002015">
    <property type="component" value="Chromosome"/>
</dbReference>
<dbReference type="GO" id="GO:0005829">
    <property type="term" value="C:cytosol"/>
    <property type="evidence" value="ECO:0007669"/>
    <property type="project" value="TreeGrafter"/>
</dbReference>
<dbReference type="GO" id="GO:0005525">
    <property type="term" value="F:GTP binding"/>
    <property type="evidence" value="ECO:0007669"/>
    <property type="project" value="UniProtKB-UniRule"/>
</dbReference>
<dbReference type="GO" id="GO:0003924">
    <property type="term" value="F:GTPase activity"/>
    <property type="evidence" value="ECO:0007669"/>
    <property type="project" value="InterPro"/>
</dbReference>
<dbReference type="GO" id="GO:0097216">
    <property type="term" value="F:guanosine tetraphosphate binding"/>
    <property type="evidence" value="ECO:0007669"/>
    <property type="project" value="UniProtKB-ARBA"/>
</dbReference>
<dbReference type="GO" id="GO:0016150">
    <property type="term" value="F:translation release factor activity, codon nonspecific"/>
    <property type="evidence" value="ECO:0007669"/>
    <property type="project" value="TreeGrafter"/>
</dbReference>
<dbReference type="GO" id="GO:0016149">
    <property type="term" value="F:translation release factor activity, codon specific"/>
    <property type="evidence" value="ECO:0007669"/>
    <property type="project" value="UniProtKB-UniRule"/>
</dbReference>
<dbReference type="GO" id="GO:0006449">
    <property type="term" value="P:regulation of translational termination"/>
    <property type="evidence" value="ECO:0007669"/>
    <property type="project" value="UniProtKB-UniRule"/>
</dbReference>
<dbReference type="CDD" id="cd04169">
    <property type="entry name" value="RF3"/>
    <property type="match status" value="1"/>
</dbReference>
<dbReference type="CDD" id="cd03689">
    <property type="entry name" value="RF3_II"/>
    <property type="match status" value="1"/>
</dbReference>
<dbReference type="CDD" id="cd16259">
    <property type="entry name" value="RF3_III"/>
    <property type="match status" value="1"/>
</dbReference>
<dbReference type="FunFam" id="2.40.30.10:FF:000040">
    <property type="entry name" value="Peptide chain release factor 3"/>
    <property type="match status" value="1"/>
</dbReference>
<dbReference type="FunFam" id="3.30.70.3280:FF:000001">
    <property type="entry name" value="Peptide chain release factor 3"/>
    <property type="match status" value="1"/>
</dbReference>
<dbReference type="FunFam" id="3.40.50.300:FF:000542">
    <property type="entry name" value="Peptide chain release factor 3"/>
    <property type="match status" value="1"/>
</dbReference>
<dbReference type="Gene3D" id="3.40.50.300">
    <property type="entry name" value="P-loop containing nucleotide triphosphate hydrolases"/>
    <property type="match status" value="2"/>
</dbReference>
<dbReference type="Gene3D" id="3.30.70.3280">
    <property type="entry name" value="Peptide chain release factor 3, domain III"/>
    <property type="match status" value="1"/>
</dbReference>
<dbReference type="HAMAP" id="MF_00072">
    <property type="entry name" value="Rel_fac_3"/>
    <property type="match status" value="1"/>
</dbReference>
<dbReference type="InterPro" id="IPR053905">
    <property type="entry name" value="EF-G-like_DII"/>
</dbReference>
<dbReference type="InterPro" id="IPR035647">
    <property type="entry name" value="EFG_III/V"/>
</dbReference>
<dbReference type="InterPro" id="IPR031157">
    <property type="entry name" value="G_TR_CS"/>
</dbReference>
<dbReference type="InterPro" id="IPR027417">
    <property type="entry name" value="P-loop_NTPase"/>
</dbReference>
<dbReference type="InterPro" id="IPR004548">
    <property type="entry name" value="PrfC"/>
</dbReference>
<dbReference type="InterPro" id="IPR032090">
    <property type="entry name" value="RF3_C"/>
</dbReference>
<dbReference type="InterPro" id="IPR038467">
    <property type="entry name" value="RF3_dom_3_sf"/>
</dbReference>
<dbReference type="InterPro" id="IPR041732">
    <property type="entry name" value="RF3_GTP-bd"/>
</dbReference>
<dbReference type="InterPro" id="IPR005225">
    <property type="entry name" value="Small_GTP-bd"/>
</dbReference>
<dbReference type="InterPro" id="IPR000795">
    <property type="entry name" value="T_Tr_GTP-bd_dom"/>
</dbReference>
<dbReference type="InterPro" id="IPR009000">
    <property type="entry name" value="Transl_B-barrel_sf"/>
</dbReference>
<dbReference type="NCBIfam" id="TIGR00503">
    <property type="entry name" value="prfC"/>
    <property type="match status" value="1"/>
</dbReference>
<dbReference type="NCBIfam" id="NF001964">
    <property type="entry name" value="PRK00741.1"/>
    <property type="match status" value="1"/>
</dbReference>
<dbReference type="NCBIfam" id="TIGR00231">
    <property type="entry name" value="small_GTP"/>
    <property type="match status" value="1"/>
</dbReference>
<dbReference type="PANTHER" id="PTHR43556">
    <property type="entry name" value="PEPTIDE CHAIN RELEASE FACTOR RF3"/>
    <property type="match status" value="1"/>
</dbReference>
<dbReference type="PANTHER" id="PTHR43556:SF2">
    <property type="entry name" value="PEPTIDE CHAIN RELEASE FACTOR RF3"/>
    <property type="match status" value="1"/>
</dbReference>
<dbReference type="Pfam" id="PF22042">
    <property type="entry name" value="EF-G_D2"/>
    <property type="match status" value="1"/>
</dbReference>
<dbReference type="Pfam" id="PF00009">
    <property type="entry name" value="GTP_EFTU"/>
    <property type="match status" value="1"/>
</dbReference>
<dbReference type="Pfam" id="PF16658">
    <property type="entry name" value="RF3_C"/>
    <property type="match status" value="1"/>
</dbReference>
<dbReference type="PRINTS" id="PR00315">
    <property type="entry name" value="ELONGATNFCT"/>
</dbReference>
<dbReference type="SUPFAM" id="SSF54980">
    <property type="entry name" value="EF-G C-terminal domain-like"/>
    <property type="match status" value="1"/>
</dbReference>
<dbReference type="SUPFAM" id="SSF52540">
    <property type="entry name" value="P-loop containing nucleoside triphosphate hydrolases"/>
    <property type="match status" value="1"/>
</dbReference>
<dbReference type="SUPFAM" id="SSF50447">
    <property type="entry name" value="Translation proteins"/>
    <property type="match status" value="1"/>
</dbReference>
<dbReference type="PROSITE" id="PS00301">
    <property type="entry name" value="G_TR_1"/>
    <property type="match status" value="1"/>
</dbReference>
<dbReference type="PROSITE" id="PS51722">
    <property type="entry name" value="G_TR_2"/>
    <property type="match status" value="1"/>
</dbReference>
<protein>
    <recommendedName>
        <fullName evidence="1">Peptide chain release factor 3</fullName>
        <shortName evidence="1">RF-3</shortName>
    </recommendedName>
</protein>
<gene>
    <name evidence="1" type="primary">prfC</name>
    <name type="ordered locus">Ssed_3382</name>
</gene>
<accession>A8FYR3</accession>
<feature type="chain" id="PRO_1000075170" description="Peptide chain release factor 3">
    <location>
        <begin position="1"/>
        <end position="526"/>
    </location>
</feature>
<feature type="domain" description="tr-type G">
    <location>
        <begin position="9"/>
        <end position="277"/>
    </location>
</feature>
<feature type="binding site" evidence="1">
    <location>
        <begin position="18"/>
        <end position="25"/>
    </location>
    <ligand>
        <name>GTP</name>
        <dbReference type="ChEBI" id="CHEBI:37565"/>
    </ligand>
</feature>
<feature type="binding site" evidence="1">
    <location>
        <begin position="86"/>
        <end position="90"/>
    </location>
    <ligand>
        <name>GTP</name>
        <dbReference type="ChEBI" id="CHEBI:37565"/>
    </ligand>
</feature>
<feature type="binding site" evidence="1">
    <location>
        <begin position="140"/>
        <end position="143"/>
    </location>
    <ligand>
        <name>GTP</name>
        <dbReference type="ChEBI" id="CHEBI:37565"/>
    </ligand>
</feature>
<evidence type="ECO:0000255" key="1">
    <source>
        <dbReference type="HAMAP-Rule" id="MF_00072"/>
    </source>
</evidence>
<name>RF3_SHESH</name>
<comment type="function">
    <text evidence="1">Increases the formation of ribosomal termination complexes and stimulates activities of RF-1 and RF-2. It binds guanine nucleotides and has strong preference for UGA stop codons. It may interact directly with the ribosome. The stimulation of RF-1 and RF-2 is significantly reduced by GTP and GDP, but not by GMP.</text>
</comment>
<comment type="subcellular location">
    <subcellularLocation>
        <location evidence="1">Cytoplasm</location>
    </subcellularLocation>
</comment>
<comment type="similarity">
    <text evidence="1">Belongs to the TRAFAC class translation factor GTPase superfamily. Classic translation factor GTPase family. PrfC subfamily.</text>
</comment>
<sequence length="526" mass="59148">MSGNKVEVDKRRTFAIISHPDAGKTTITEKVLLFGNALQKAGTVKGKKSGQHAKSDWMEMEKDRGISITTSVMQFPYNGALVNLLDTPGHEDFSEDTYRTLTAVDSCLMVIDSAKGVEQRTIKLMEVTRLRDTPIVTFMNKLDRDIRDPLELMDEVEKVLNIACAPITWPIGCGKEFKGVYHLLRDEVILYQSGQGHTIQDSTIIKGLDNPELDAAIGTYAAEVREELELVLGASNEFDLELFLAGELTPVYFGTALGNFGVDHILDGIVEWAPKPQARETEVREVQPEDEKFSGFVFKIQANMDPKHRDRVAFMRVCSGRYEQGMKMHHVRLGKDVNVSDALTFMAGDRNRAEVAYPGDIIGLHNHGTMRIGDTFTQGEKLRFTGIPNFAPEMFRRIRLKDPLKQKQLLKGLVQLSEEGAVQVFRPIDTNDLIVGAVGILQFEVVVGRLKSEYKVEAIYEAISVSTARWVYCDDERKLEEFRRKCSTNLALDGGDNLTYIAPTMVNLNLSMERYPDIKFAKTREN</sequence>
<keyword id="KW-0963">Cytoplasm</keyword>
<keyword id="KW-0342">GTP-binding</keyword>
<keyword id="KW-0547">Nucleotide-binding</keyword>
<keyword id="KW-0648">Protein biosynthesis</keyword>
<keyword id="KW-1185">Reference proteome</keyword>